<feature type="signal peptide" evidence="2">
    <location>
        <begin position="1"/>
        <end position="16"/>
    </location>
</feature>
<feature type="chain" id="PRO_0000373210" description="Protein MGF 110-8L">
    <location>
        <begin position="17"/>
        <end position="124"/>
    </location>
</feature>
<feature type="glycosylation site" description="N-linked (GlcNAc...) asparagine; by host" evidence="2">
    <location>
        <position position="76"/>
    </location>
</feature>
<feature type="glycosylation site" description="N-linked (GlcNAc...) asparagine; by host" evidence="2">
    <location>
        <position position="94"/>
    </location>
</feature>
<reference key="1">
    <citation type="submission" date="2003-03" db="EMBL/GenBank/DDBJ databases">
        <title>African swine fever virus genomes.</title>
        <authorList>
            <person name="Kutish G.F."/>
            <person name="Rock D.L."/>
        </authorList>
    </citation>
    <scope>NUCLEOTIDE SEQUENCE [LARGE SCALE GENOMIC DNA]</scope>
</reference>
<organismHost>
    <name type="scientific">Ornithodoros</name>
    <name type="common">relapsing fever ticks</name>
    <dbReference type="NCBI Taxonomy" id="6937"/>
</organismHost>
<organismHost>
    <name type="scientific">Phacochoerus aethiopicus</name>
    <name type="common">Warthog</name>
    <dbReference type="NCBI Taxonomy" id="85517"/>
</organismHost>
<organismHost>
    <name type="scientific">Phacochoerus africanus</name>
    <name type="common">Warthog</name>
    <dbReference type="NCBI Taxonomy" id="41426"/>
</organismHost>
<organismHost>
    <name type="scientific">Potamochoerus larvatus</name>
    <name type="common">Bushpig</name>
    <dbReference type="NCBI Taxonomy" id="273792"/>
</organismHost>
<organismHost>
    <name type="scientific">Sus scrofa</name>
    <name type="common">Pig</name>
    <dbReference type="NCBI Taxonomy" id="9823"/>
</organismHost>
<comment type="function">
    <text evidence="1">Plays a role in virus cell tropism, and may be required for efficient virus replication in macrophages.</text>
</comment>
<comment type="similarity">
    <text evidence="3">Belongs to the asfivirus MGF 110 family.</text>
</comment>
<proteinExistence type="inferred from homology"/>
<protein>
    <recommendedName>
        <fullName>Protein MGF 110-8L</fullName>
    </recommendedName>
</protein>
<organism>
    <name type="scientific">African swine fever virus (isolate Tick/South Africa/Pretoriuskop Pr4/1996)</name>
    <name type="common">ASFV</name>
    <dbReference type="NCBI Taxonomy" id="561443"/>
    <lineage>
        <taxon>Viruses</taxon>
        <taxon>Varidnaviria</taxon>
        <taxon>Bamfordvirae</taxon>
        <taxon>Nucleocytoviricota</taxon>
        <taxon>Pokkesviricetes</taxon>
        <taxon>Asfuvirales</taxon>
        <taxon>Asfarviridae</taxon>
        <taxon>Asfivirus</taxon>
        <taxon>African swine fever virus</taxon>
    </lineage>
</organism>
<name>1108L_ASFP4</name>
<keyword id="KW-0325">Glycoprotein</keyword>
<keyword id="KW-0732">Signal</keyword>
<sequence length="124" mass="14763">MKVLILVLLGVVILQAAPIRKLEDLLPTRYPPEHELVYWCTYANQCDFCWECVHGICRNRIQADWPVIHQNDWIINCTVSRWNGICSYYEGPRNHTDHQMDCANPTSHTYPHREYMKIYERDDL</sequence>
<accession>P0C9I8</accession>
<gene>
    <name type="ordered locus">Pret-019</name>
</gene>
<evidence type="ECO:0000250" key="1"/>
<evidence type="ECO:0000255" key="2"/>
<evidence type="ECO:0000305" key="3"/>
<dbReference type="EMBL" id="AY261363">
    <property type="status" value="NOT_ANNOTATED_CDS"/>
    <property type="molecule type" value="Genomic_DNA"/>
</dbReference>
<dbReference type="Proteomes" id="UP000000859">
    <property type="component" value="Segment"/>
</dbReference>
<dbReference type="InterPro" id="IPR004848">
    <property type="entry name" value="ASFV_fam_110"/>
</dbReference>
<dbReference type="Pfam" id="PF01639">
    <property type="entry name" value="v110"/>
    <property type="match status" value="1"/>
</dbReference>